<dbReference type="EMBL" id="M20775">
    <property type="protein sequence ID" value="AAB59756.1"/>
    <property type="status" value="ALT_SEQ"/>
    <property type="molecule type" value="Genomic_DNA"/>
</dbReference>
<dbReference type="PIR" id="A29194">
    <property type="entry name" value="DNVPBF"/>
</dbReference>
<dbReference type="SMR" id="P13893"/>
<dbReference type="Proteomes" id="UP000134051">
    <property type="component" value="Genome"/>
</dbReference>
<dbReference type="GO" id="GO:0030430">
    <property type="term" value="C:host cell cytoplasm"/>
    <property type="evidence" value="ECO:0007669"/>
    <property type="project" value="UniProtKB-SubCell"/>
</dbReference>
<proteinExistence type="predicted"/>
<sequence length="109" mass="12196">MPNGTPTLNRPLARLALRITSCAHQGLERLIRLLHLLLHLGRSLLDLFQTLRTALTQPSTSIFSLTRLPLLLPPLRLLLLLLLPSPPRQPALASRLTQPNRPNRGRLAK</sequence>
<evidence type="ECO:0000256" key="1">
    <source>
        <dbReference type="SAM" id="MobiDB-lite"/>
    </source>
</evidence>
<evidence type="ECO:0000269" key="2">
    <source>
    </source>
</evidence>
<evidence type="ECO:0000305" key="3"/>
<feature type="chain" id="PRO_0000115029" description="Avian agnoprotein 2b">
    <location>
        <begin position="1"/>
        <end position="109"/>
    </location>
</feature>
<feature type="region of interest" description="Disordered" evidence="1">
    <location>
        <begin position="89"/>
        <end position="109"/>
    </location>
</feature>
<feature type="splice variant" id="VSP_036016" description="In isoform Agno-2a." evidence="3">
    <original>SLTRLPLLLPPLRLLLLLLLPSPPRQPALASRLTQPNRPNRGRLAK</original>
    <variation>RDIGAVPMTVRTASGN</variation>
    <location>
        <begin position="64"/>
        <end position="109"/>
    </location>
</feature>
<organismHost>
    <name type="scientific">Psittacidae</name>
    <name type="common">parrots</name>
    <dbReference type="NCBI Taxonomy" id="9224"/>
</organismHost>
<organism>
    <name type="scientific">Budgerigar fledgling disease virus</name>
    <name type="common">BFPyV</name>
    <name type="synonym">Aves polyomavirus 1</name>
    <dbReference type="NCBI Taxonomy" id="1891747"/>
    <lineage>
        <taxon>Viruses</taxon>
        <taxon>Monodnaviria</taxon>
        <taxon>Shotokuvirae</taxon>
        <taxon>Cossaviricota</taxon>
        <taxon>Papovaviricetes</taxon>
        <taxon>Sepolyvirales</taxon>
        <taxon>Polyomaviridae</taxon>
        <taxon>Gammapolyomavirus</taxon>
    </lineage>
</organism>
<protein>
    <recommendedName>
        <fullName>Avian agnoprotein 2b</fullName>
    </recommendedName>
    <alternativeName>
        <fullName>Agno-2b</fullName>
    </alternativeName>
</protein>
<reference key="1">
    <citation type="journal article" date="1988" name="Virology">
        <title>The genome of budgerigar fledgling disease virus, an avian polyomavirus.</title>
        <authorList>
            <person name="Rott O."/>
            <person name="Kroeger M."/>
            <person name="Mueller H."/>
            <person name="Hobom G."/>
        </authorList>
    </citation>
    <scope>NUCLEOTIDE SEQUENCE [GENOMIC DNA]</scope>
</reference>
<reference key="2">
    <citation type="journal article" date="1999" name="Virus Genes">
        <title>Recombinant expression of late genes agno-2a and agno-2b of avian polyomavirus BFDV.</title>
        <authorList>
            <person name="Liu Q."/>
            <person name="Hobom G."/>
        </authorList>
    </citation>
    <scope>SUBCELLULAR LOCATION AND ISOFORM AGNO-2A AND AGNO-2B</scope>
</reference>
<name>AGNO2_BFPYV</name>
<accession>P13893</accession>
<comment type="subcellular location">
    <subcellularLocation>
        <location evidence="2">Host cytoplasm</location>
    </subcellularLocation>
    <text>present also in the cell surface and in the outer nuclear membrane.</text>
</comment>
<comment type="alternative products">
    <event type="alternative splicing"/>
    <event type="alternative initiation"/>
    <isoform>
        <id>P13893-1</id>
        <name>Agno-2b</name>
        <sequence type="displayed"/>
    </isoform>
    <isoform>
        <id>P13893-2</id>
        <name>Agno-2a</name>
        <sequence type="described" ref="VSP_036016"/>
    </isoform>
    <isoform>
        <id>A6QL29-1</id>
        <name>Agno-1a</name>
        <sequence type="external"/>
    </isoform>
    <isoform>
        <id>A6QL29-2</id>
        <name>Agno-1b</name>
        <sequence type="external"/>
    </isoform>
    <isoform>
        <id>P13891-1</id>
        <name>VP1</name>
        <sequence type="external"/>
    </isoform>
    <isoform>
        <id>P13892-1</id>
        <name>VP2</name>
        <name>Minor capsid protein VP2</name>
        <sequence type="external"/>
    </isoform>
    <isoform>
        <id>P13892-2</id>
        <name>VP3</name>
        <name>Minor capsid protein VP3</name>
        <sequence type="external"/>
    </isoform>
</comment>
<comment type="miscellaneous">
    <molecule>Isoform Agno-2b</molecule>
    <text>Produced by alternative initiation of the late mRNA.</text>
</comment>
<comment type="miscellaneous">
    <molecule>Isoform Agno-2a</molecule>
    <text evidence="3">Produced by alternative splicing of the late mRNA.</text>
</comment>
<comment type="caution">
    <text evidence="3">Encoded by the same late mRNA leader region, but very different from primate polyomavirus agnoproteins.</text>
</comment>
<comment type="sequence caution" evidence="3">
    <conflict type="erroneous gene model prediction">
        <sequence resource="EMBL-CDS" id="AAB59756"/>
    </conflict>
</comment>
<keyword id="KW-0024">Alternative initiation</keyword>
<keyword id="KW-0025">Alternative splicing</keyword>
<keyword id="KW-1035">Host cytoplasm</keyword>
<keyword id="KW-0945">Host-virus interaction</keyword>
<keyword id="KW-0597">Phosphoprotein</keyword>
<keyword id="KW-1185">Reference proteome</keyword>